<keyword id="KW-0378">Hydrolase</keyword>
<keyword id="KW-0460">Magnesium</keyword>
<keyword id="KW-0479">Metal-binding</keyword>
<keyword id="KW-0546">Nucleotide metabolism</keyword>
<keyword id="KW-0547">Nucleotide-binding</keyword>
<keyword id="KW-1185">Reference proteome</keyword>
<name>IXTPA_CAMHC</name>
<organism>
    <name type="scientific">Campylobacter hominis (strain ATCC BAA-381 / DSM 21671 / CCUG 45161 / LMG 19568 / NCTC 13146 / CH001A)</name>
    <dbReference type="NCBI Taxonomy" id="360107"/>
    <lineage>
        <taxon>Bacteria</taxon>
        <taxon>Pseudomonadati</taxon>
        <taxon>Campylobacterota</taxon>
        <taxon>Epsilonproteobacteria</taxon>
        <taxon>Campylobacterales</taxon>
        <taxon>Campylobacteraceae</taxon>
        <taxon>Campylobacter</taxon>
    </lineage>
</organism>
<proteinExistence type="inferred from homology"/>
<reference key="1">
    <citation type="submission" date="2007-07" db="EMBL/GenBank/DDBJ databases">
        <title>Complete genome sequence of Campylobacter hominis ATCC BAA-381, a commensal isolated from the human gastrointestinal tract.</title>
        <authorList>
            <person name="Fouts D.E."/>
            <person name="Mongodin E.F."/>
            <person name="Puiu D."/>
            <person name="Sebastian Y."/>
            <person name="Miller W.G."/>
            <person name="Mandrell R.E."/>
            <person name="Nelson K.E."/>
        </authorList>
    </citation>
    <scope>NUCLEOTIDE SEQUENCE [LARGE SCALE GENOMIC DNA]</scope>
    <source>
        <strain>ATCC BAA-381 / DSM 21671 / CCUG 45161 / LMG 19568 / NCTC 13146 / CH001A</strain>
    </source>
</reference>
<evidence type="ECO:0000255" key="1">
    <source>
        <dbReference type="HAMAP-Rule" id="MF_01405"/>
    </source>
</evidence>
<dbReference type="EC" id="3.6.1.66" evidence="1"/>
<dbReference type="EMBL" id="CP000776">
    <property type="protein sequence ID" value="ABS52222.1"/>
    <property type="molecule type" value="Genomic_DNA"/>
</dbReference>
<dbReference type="RefSeq" id="WP_011991478.1">
    <property type="nucleotide sequence ID" value="NC_009714.1"/>
</dbReference>
<dbReference type="SMR" id="A7HZE0"/>
<dbReference type="STRING" id="360107.CHAB381_0009"/>
<dbReference type="KEGG" id="cha:CHAB381_0009"/>
<dbReference type="eggNOG" id="COG0127">
    <property type="taxonomic scope" value="Bacteria"/>
</dbReference>
<dbReference type="HOGENOM" id="CLU_082080_0_2_7"/>
<dbReference type="OrthoDB" id="9807456at2"/>
<dbReference type="Proteomes" id="UP000002407">
    <property type="component" value="Chromosome"/>
</dbReference>
<dbReference type="GO" id="GO:0005829">
    <property type="term" value="C:cytosol"/>
    <property type="evidence" value="ECO:0007669"/>
    <property type="project" value="TreeGrafter"/>
</dbReference>
<dbReference type="GO" id="GO:0035870">
    <property type="term" value="F:dITP diphosphatase activity"/>
    <property type="evidence" value="ECO:0007669"/>
    <property type="project" value="RHEA"/>
</dbReference>
<dbReference type="GO" id="GO:0036220">
    <property type="term" value="F:ITP diphosphatase activity"/>
    <property type="evidence" value="ECO:0007669"/>
    <property type="project" value="UniProtKB-EC"/>
</dbReference>
<dbReference type="GO" id="GO:0046872">
    <property type="term" value="F:metal ion binding"/>
    <property type="evidence" value="ECO:0007669"/>
    <property type="project" value="UniProtKB-KW"/>
</dbReference>
<dbReference type="GO" id="GO:0000166">
    <property type="term" value="F:nucleotide binding"/>
    <property type="evidence" value="ECO:0007669"/>
    <property type="project" value="UniProtKB-KW"/>
</dbReference>
<dbReference type="GO" id="GO:0017111">
    <property type="term" value="F:ribonucleoside triphosphate phosphatase activity"/>
    <property type="evidence" value="ECO:0007669"/>
    <property type="project" value="InterPro"/>
</dbReference>
<dbReference type="GO" id="GO:0036222">
    <property type="term" value="F:XTP diphosphatase activity"/>
    <property type="evidence" value="ECO:0007669"/>
    <property type="project" value="RHEA"/>
</dbReference>
<dbReference type="GO" id="GO:0009117">
    <property type="term" value="P:nucleotide metabolic process"/>
    <property type="evidence" value="ECO:0007669"/>
    <property type="project" value="UniProtKB-KW"/>
</dbReference>
<dbReference type="GO" id="GO:0009146">
    <property type="term" value="P:purine nucleoside triphosphate catabolic process"/>
    <property type="evidence" value="ECO:0007669"/>
    <property type="project" value="UniProtKB-UniRule"/>
</dbReference>
<dbReference type="CDD" id="cd00515">
    <property type="entry name" value="HAM1"/>
    <property type="match status" value="1"/>
</dbReference>
<dbReference type="FunFam" id="3.90.950.10:FF:000001">
    <property type="entry name" value="dITP/XTP pyrophosphatase"/>
    <property type="match status" value="1"/>
</dbReference>
<dbReference type="Gene3D" id="3.90.950.10">
    <property type="match status" value="1"/>
</dbReference>
<dbReference type="HAMAP" id="MF_01405">
    <property type="entry name" value="Non_canon_purine_NTPase"/>
    <property type="match status" value="1"/>
</dbReference>
<dbReference type="InterPro" id="IPR020922">
    <property type="entry name" value="dITP/XTP_pyrophosphatase"/>
</dbReference>
<dbReference type="InterPro" id="IPR029001">
    <property type="entry name" value="ITPase-like_fam"/>
</dbReference>
<dbReference type="InterPro" id="IPR002637">
    <property type="entry name" value="RdgB/HAM1"/>
</dbReference>
<dbReference type="NCBIfam" id="TIGR00042">
    <property type="entry name" value="RdgB/HAM1 family non-canonical purine NTP pyrophosphatase"/>
    <property type="match status" value="1"/>
</dbReference>
<dbReference type="PANTHER" id="PTHR11067:SF9">
    <property type="entry name" value="INOSINE TRIPHOSPHATE PYROPHOSPHATASE"/>
    <property type="match status" value="1"/>
</dbReference>
<dbReference type="PANTHER" id="PTHR11067">
    <property type="entry name" value="INOSINE TRIPHOSPHATE PYROPHOSPHATASE/HAM1 PROTEIN"/>
    <property type="match status" value="1"/>
</dbReference>
<dbReference type="Pfam" id="PF01725">
    <property type="entry name" value="Ham1p_like"/>
    <property type="match status" value="1"/>
</dbReference>
<dbReference type="SUPFAM" id="SSF52972">
    <property type="entry name" value="ITPase-like"/>
    <property type="match status" value="1"/>
</dbReference>
<comment type="function">
    <text evidence="1">Pyrophosphatase that catalyzes the hydrolysis of nucleoside triphosphates to their monophosphate derivatives, with a high preference for the non-canonical purine nucleotides XTP (xanthosine triphosphate), dITP (deoxyinosine triphosphate) and ITP. Seems to function as a house-cleaning enzyme that removes non-canonical purine nucleotides from the nucleotide pool, thus preventing their incorporation into DNA/RNA and avoiding chromosomal lesions.</text>
</comment>
<comment type="catalytic activity">
    <reaction evidence="1">
        <text>XTP + H2O = XMP + diphosphate + H(+)</text>
        <dbReference type="Rhea" id="RHEA:28610"/>
        <dbReference type="ChEBI" id="CHEBI:15377"/>
        <dbReference type="ChEBI" id="CHEBI:15378"/>
        <dbReference type="ChEBI" id="CHEBI:33019"/>
        <dbReference type="ChEBI" id="CHEBI:57464"/>
        <dbReference type="ChEBI" id="CHEBI:61314"/>
        <dbReference type="EC" id="3.6.1.66"/>
    </reaction>
</comment>
<comment type="catalytic activity">
    <reaction evidence="1">
        <text>dITP + H2O = dIMP + diphosphate + H(+)</text>
        <dbReference type="Rhea" id="RHEA:28342"/>
        <dbReference type="ChEBI" id="CHEBI:15377"/>
        <dbReference type="ChEBI" id="CHEBI:15378"/>
        <dbReference type="ChEBI" id="CHEBI:33019"/>
        <dbReference type="ChEBI" id="CHEBI:61194"/>
        <dbReference type="ChEBI" id="CHEBI:61382"/>
        <dbReference type="EC" id="3.6.1.66"/>
    </reaction>
</comment>
<comment type="catalytic activity">
    <reaction evidence="1">
        <text>ITP + H2O = IMP + diphosphate + H(+)</text>
        <dbReference type="Rhea" id="RHEA:29399"/>
        <dbReference type="ChEBI" id="CHEBI:15377"/>
        <dbReference type="ChEBI" id="CHEBI:15378"/>
        <dbReference type="ChEBI" id="CHEBI:33019"/>
        <dbReference type="ChEBI" id="CHEBI:58053"/>
        <dbReference type="ChEBI" id="CHEBI:61402"/>
        <dbReference type="EC" id="3.6.1.66"/>
    </reaction>
</comment>
<comment type="cofactor">
    <cofactor evidence="1">
        <name>Mg(2+)</name>
        <dbReference type="ChEBI" id="CHEBI:18420"/>
    </cofactor>
    <text evidence="1">Binds 1 Mg(2+) ion per subunit.</text>
</comment>
<comment type="subunit">
    <text evidence="1">Homodimer.</text>
</comment>
<comment type="similarity">
    <text evidence="1">Belongs to the HAM1 NTPase family.</text>
</comment>
<gene>
    <name type="ordered locus">CHAB381_0009</name>
</gene>
<feature type="chain" id="PRO_1000068412" description="dITP/XTP pyrophosphatase">
    <location>
        <begin position="1"/>
        <end position="206"/>
    </location>
</feature>
<feature type="active site" description="Proton acceptor" evidence="1">
    <location>
        <position position="74"/>
    </location>
</feature>
<feature type="binding site" evidence="1">
    <location>
        <begin position="7"/>
        <end position="12"/>
    </location>
    <ligand>
        <name>substrate</name>
    </ligand>
</feature>
<feature type="binding site" evidence="1">
    <location>
        <position position="74"/>
    </location>
    <ligand>
        <name>Mg(2+)</name>
        <dbReference type="ChEBI" id="CHEBI:18420"/>
    </ligand>
</feature>
<feature type="binding site" evidence="1">
    <location>
        <position position="75"/>
    </location>
    <ligand>
        <name>substrate</name>
    </ligand>
</feature>
<feature type="binding site" evidence="1">
    <location>
        <begin position="159"/>
        <end position="162"/>
    </location>
    <ligand>
        <name>substrate</name>
    </ligand>
</feature>
<feature type="binding site" evidence="1">
    <location>
        <position position="182"/>
    </location>
    <ligand>
        <name>substrate</name>
    </ligand>
</feature>
<feature type="binding site" evidence="1">
    <location>
        <begin position="187"/>
        <end position="188"/>
    </location>
    <ligand>
        <name>substrate</name>
    </ligand>
</feature>
<protein>
    <recommendedName>
        <fullName evidence="1">dITP/XTP pyrophosphatase</fullName>
        <ecNumber evidence="1">3.6.1.66</ecNumber>
    </recommendedName>
    <alternativeName>
        <fullName evidence="1">Non-canonical purine NTP pyrophosphatase</fullName>
    </alternativeName>
    <alternativeName>
        <fullName evidence="1">Non-standard purine NTP pyrophosphatase</fullName>
    </alternativeName>
    <alternativeName>
        <fullName evidence="1">Nucleoside-triphosphate diphosphatase</fullName>
    </alternativeName>
    <alternativeName>
        <fullName evidence="1">Nucleoside-triphosphate pyrophosphatase</fullName>
        <shortName evidence="1">NTPase</shortName>
    </alternativeName>
</protein>
<accession>A7HZE0</accession>
<sequence length="206" mass="23253">MKIILATSNKDKVKEIKAFYKNYEIYALNEIMQPFEIKETGSSFKENALIKVNAVYKKLEEMKLENEFMALSDDSGICVDILGGAPGIYSARYSNDMVIHPTDESNRAKLISKLHKKNVKTSPAHYTACIALSCKSGNFTTHGFMHGRVIDEERGNNGFGYDFMFIANGFSKTIGELDENTKLKISHRSKGLFLMSKILKILNRSF</sequence>